<protein>
    <recommendedName>
        <fullName evidence="1">Anhydro-N-acetylmuramic acid kinase</fullName>
        <ecNumber evidence="1">2.7.1.170</ecNumber>
    </recommendedName>
    <alternativeName>
        <fullName evidence="1">AnhMurNAc kinase</fullName>
    </alternativeName>
</protein>
<sequence length="380" mass="40741">MHVIGLISGTSVDGIDAALVDLSGTSLDLQVELLAAHTYPYSEPVRSQIISLCKGEAIPLAELALLDEAIAQEFAQAALEIQQGQPAAELIGSHGQTVYHRPVIGNTPAYTLQLGRGAIIAQQTGLPTITNFRVADTNAGGEGAPLVSRIDICLFSHPQQRRCVQNIGGIANLTYLPPLSDVAQIGVGVQGWDTGPGNSLLDLAVQYLSGGRQAYDDKGNWAAQGTPCQALVEQWLSHPYFEQAPPKSTGRELFGWDYLQTCLRDAEPYHLSAEDFLATLTELTAASIVLNYRQFLPALPDQVLLCGGGVRNHYLKQRLATLLTPIPVLSTNEVGLSADAKEAIAFAVLGYWRYLGLPGNVPAVTGARREVLLGELHTYP</sequence>
<comment type="function">
    <text evidence="1">Catalyzes the specific phosphorylation of 1,6-anhydro-N-acetylmuramic acid (anhMurNAc) with the simultaneous cleavage of the 1,6-anhydro ring, generating MurNAc-6-P. Is required for the utilization of anhMurNAc either imported from the medium or derived from its own cell wall murein, and thus plays a role in cell wall recycling.</text>
</comment>
<comment type="catalytic activity">
    <reaction evidence="1">
        <text>1,6-anhydro-N-acetyl-beta-muramate + ATP + H2O = N-acetyl-D-muramate 6-phosphate + ADP + H(+)</text>
        <dbReference type="Rhea" id="RHEA:24952"/>
        <dbReference type="ChEBI" id="CHEBI:15377"/>
        <dbReference type="ChEBI" id="CHEBI:15378"/>
        <dbReference type="ChEBI" id="CHEBI:30616"/>
        <dbReference type="ChEBI" id="CHEBI:58690"/>
        <dbReference type="ChEBI" id="CHEBI:58722"/>
        <dbReference type="ChEBI" id="CHEBI:456216"/>
        <dbReference type="EC" id="2.7.1.170"/>
    </reaction>
</comment>
<comment type="pathway">
    <text evidence="1">Amino-sugar metabolism; 1,6-anhydro-N-acetylmuramate degradation.</text>
</comment>
<comment type="pathway">
    <text evidence="1">Cell wall biogenesis; peptidoglycan recycling.</text>
</comment>
<comment type="similarity">
    <text evidence="1">Belongs to the anhydro-N-acetylmuramic acid kinase family.</text>
</comment>
<reference key="1">
    <citation type="journal article" date="2011" name="MBio">
        <title>Novel metabolic attributes of the genus Cyanothece, comprising a group of unicellular nitrogen-fixing Cyanobacteria.</title>
        <authorList>
            <person name="Bandyopadhyay A."/>
            <person name="Elvitigala T."/>
            <person name="Welsh E."/>
            <person name="Stockel J."/>
            <person name="Liberton M."/>
            <person name="Min H."/>
            <person name="Sherman L.A."/>
            <person name="Pakrasi H.B."/>
        </authorList>
    </citation>
    <scope>NUCLEOTIDE SEQUENCE [LARGE SCALE GENOMIC DNA]</scope>
    <source>
        <strain>PCC 7425 / ATCC 29141</strain>
    </source>
</reference>
<organism>
    <name type="scientific">Cyanothece sp. (strain PCC 7425 / ATCC 29141)</name>
    <dbReference type="NCBI Taxonomy" id="395961"/>
    <lineage>
        <taxon>Bacteria</taxon>
        <taxon>Bacillati</taxon>
        <taxon>Cyanobacteriota</taxon>
        <taxon>Cyanophyceae</taxon>
        <taxon>Gomontiellales</taxon>
        <taxon>Cyanothecaceae</taxon>
        <taxon>Cyanothece</taxon>
    </lineage>
</organism>
<gene>
    <name evidence="1" type="primary">anmK</name>
    <name type="ordered locus">Cyan7425_0956</name>
</gene>
<evidence type="ECO:0000255" key="1">
    <source>
        <dbReference type="HAMAP-Rule" id="MF_01270"/>
    </source>
</evidence>
<proteinExistence type="inferred from homology"/>
<feature type="chain" id="PRO_1000214163" description="Anhydro-N-acetylmuramic acid kinase">
    <location>
        <begin position="1"/>
        <end position="380"/>
    </location>
</feature>
<feature type="binding site" evidence="1">
    <location>
        <begin position="9"/>
        <end position="16"/>
    </location>
    <ligand>
        <name>ATP</name>
        <dbReference type="ChEBI" id="CHEBI:30616"/>
    </ligand>
</feature>
<name>ANMK_CYAP4</name>
<accession>B8HX39</accession>
<dbReference type="EC" id="2.7.1.170" evidence="1"/>
<dbReference type="EMBL" id="CP001344">
    <property type="protein sequence ID" value="ACL43342.1"/>
    <property type="molecule type" value="Genomic_DNA"/>
</dbReference>
<dbReference type="SMR" id="B8HX39"/>
<dbReference type="STRING" id="395961.Cyan7425_0956"/>
<dbReference type="KEGG" id="cyn:Cyan7425_0956"/>
<dbReference type="eggNOG" id="COG2377">
    <property type="taxonomic scope" value="Bacteria"/>
</dbReference>
<dbReference type="HOGENOM" id="CLU_038782_1_0_3"/>
<dbReference type="OrthoDB" id="9763949at2"/>
<dbReference type="UniPathway" id="UPA00343"/>
<dbReference type="UniPathway" id="UPA00544"/>
<dbReference type="GO" id="GO:0005524">
    <property type="term" value="F:ATP binding"/>
    <property type="evidence" value="ECO:0007669"/>
    <property type="project" value="UniProtKB-UniRule"/>
</dbReference>
<dbReference type="GO" id="GO:0016301">
    <property type="term" value="F:kinase activity"/>
    <property type="evidence" value="ECO:0007669"/>
    <property type="project" value="UniProtKB-KW"/>
</dbReference>
<dbReference type="GO" id="GO:0016773">
    <property type="term" value="F:phosphotransferase activity, alcohol group as acceptor"/>
    <property type="evidence" value="ECO:0007669"/>
    <property type="project" value="UniProtKB-UniRule"/>
</dbReference>
<dbReference type="GO" id="GO:0097175">
    <property type="term" value="P:1,6-anhydro-N-acetyl-beta-muramic acid catabolic process"/>
    <property type="evidence" value="ECO:0007669"/>
    <property type="project" value="UniProtKB-UniRule"/>
</dbReference>
<dbReference type="GO" id="GO:0006040">
    <property type="term" value="P:amino sugar metabolic process"/>
    <property type="evidence" value="ECO:0007669"/>
    <property type="project" value="InterPro"/>
</dbReference>
<dbReference type="GO" id="GO:0009254">
    <property type="term" value="P:peptidoglycan turnover"/>
    <property type="evidence" value="ECO:0007669"/>
    <property type="project" value="UniProtKB-UniRule"/>
</dbReference>
<dbReference type="CDD" id="cd24050">
    <property type="entry name" value="ASKHA_NBD_ANMK"/>
    <property type="match status" value="1"/>
</dbReference>
<dbReference type="Gene3D" id="3.30.420.40">
    <property type="match status" value="2"/>
</dbReference>
<dbReference type="HAMAP" id="MF_01270">
    <property type="entry name" value="AnhMurNAc_kinase"/>
    <property type="match status" value="1"/>
</dbReference>
<dbReference type="InterPro" id="IPR005338">
    <property type="entry name" value="Anhydro_N_Ac-Mur_kinase"/>
</dbReference>
<dbReference type="InterPro" id="IPR043129">
    <property type="entry name" value="ATPase_NBD"/>
</dbReference>
<dbReference type="NCBIfam" id="NF007143">
    <property type="entry name" value="PRK09585.2-2"/>
    <property type="match status" value="1"/>
</dbReference>
<dbReference type="NCBIfam" id="NF007148">
    <property type="entry name" value="PRK09585.3-2"/>
    <property type="match status" value="1"/>
</dbReference>
<dbReference type="PANTHER" id="PTHR30605">
    <property type="entry name" value="ANHYDRO-N-ACETYLMURAMIC ACID KINASE"/>
    <property type="match status" value="1"/>
</dbReference>
<dbReference type="PANTHER" id="PTHR30605:SF0">
    <property type="entry name" value="ANHYDRO-N-ACETYLMURAMIC ACID KINASE"/>
    <property type="match status" value="1"/>
</dbReference>
<dbReference type="Pfam" id="PF03702">
    <property type="entry name" value="AnmK"/>
    <property type="match status" value="1"/>
</dbReference>
<dbReference type="SUPFAM" id="SSF53067">
    <property type="entry name" value="Actin-like ATPase domain"/>
    <property type="match status" value="1"/>
</dbReference>
<keyword id="KW-0067">ATP-binding</keyword>
<keyword id="KW-0119">Carbohydrate metabolism</keyword>
<keyword id="KW-0418">Kinase</keyword>
<keyword id="KW-0547">Nucleotide-binding</keyword>
<keyword id="KW-0808">Transferase</keyword>